<keyword id="KW-0325">Glycoprotein</keyword>
<keyword id="KW-1032">Host cell membrane</keyword>
<keyword id="KW-1043">Host membrane</keyword>
<keyword id="KW-0472">Membrane</keyword>
<keyword id="KW-0964">Secreted</keyword>
<keyword id="KW-0732">Signal</keyword>
<keyword id="KW-0843">Virulence</keyword>
<comment type="function">
    <text evidence="4">Secreted effector that completely suppresses the host cell death induced by cell death-inducing proteins.</text>
</comment>
<comment type="subcellular location">
    <subcellularLocation>
        <location evidence="4">Secreted</location>
    </subcellularLocation>
    <subcellularLocation>
        <location evidence="4">Host cell membrane</location>
    </subcellularLocation>
</comment>
<comment type="domain">
    <text evidence="7">The RxLR-dEER motif acts to carry the protein into the host cell cytoplasm through binding to cell surface phosphatidylinositol-3-phosphate.</text>
</comment>
<comment type="similarity">
    <text evidence="6">Belongs to the RxLR effector family.</text>
</comment>
<feature type="signal peptide" evidence="1">
    <location>
        <begin position="1"/>
        <end position="19"/>
    </location>
</feature>
<feature type="chain" id="PRO_0000447942" description="Secreted RxLR effector protein 90">
    <location>
        <begin position="20"/>
        <end position="279"/>
    </location>
</feature>
<feature type="region of interest" description="Disordered" evidence="3">
    <location>
        <begin position="29"/>
        <end position="53"/>
    </location>
</feature>
<feature type="region of interest" description="Disordered" evidence="3">
    <location>
        <begin position="135"/>
        <end position="176"/>
    </location>
</feature>
<feature type="short sequence motif" description="RxLR-dEER" evidence="7">
    <location>
        <begin position="29"/>
        <end position="46"/>
    </location>
</feature>
<feature type="compositionally biased region" description="Low complexity" evidence="3">
    <location>
        <begin position="135"/>
        <end position="146"/>
    </location>
</feature>
<feature type="compositionally biased region" description="Polar residues" evidence="3">
    <location>
        <begin position="147"/>
        <end position="163"/>
    </location>
</feature>
<feature type="compositionally biased region" description="Gly residues" evidence="3">
    <location>
        <begin position="166"/>
        <end position="176"/>
    </location>
</feature>
<feature type="glycosylation site" description="N-linked (GlcNAc...) asparagine" evidence="2">
    <location>
        <position position="37"/>
    </location>
</feature>
<feature type="glycosylation site" description="N-linked (GlcNAc...) asparagine" evidence="2">
    <location>
        <position position="217"/>
    </location>
</feature>
<accession>P0CV33</accession>
<name>RLR90_PLAVT</name>
<sequence length="279" mass="27537">MKSAAAFATFLTLSVFVATTEVQGTPGLRGLRSLADNQSTESSEGRKDHYNHHRHVKKVIKKVKKIAIPVPVAVPQYIPVPISGPSSVIASQNTAVVGSSNNVVAASGAGAVGSGVLGPGGVTPAPTTMTGRPVATPAPTTSVPSSLVNTDTSDNQLPTTPVAASQGGGIGSNLAGGSGNSVSMSGFGGGNQMGTFGNSMFGGRGANTGNGFNGNGNNSFGQQMGIDTPNGNMFGGFGRQGAAGGGGQRGFGGEAPDGINSVASGNALGGGITRRRRRL</sequence>
<evidence type="ECO:0000255" key="1"/>
<evidence type="ECO:0000255" key="2">
    <source>
        <dbReference type="PROSITE-ProRule" id="PRU00498"/>
    </source>
</evidence>
<evidence type="ECO:0000256" key="3">
    <source>
        <dbReference type="SAM" id="MobiDB-lite"/>
    </source>
</evidence>
<evidence type="ECO:0000269" key="4">
    <source>
    </source>
</evidence>
<evidence type="ECO:0000303" key="5">
    <source>
    </source>
</evidence>
<evidence type="ECO:0000305" key="6"/>
<evidence type="ECO:0000305" key="7">
    <source>
    </source>
</evidence>
<reference key="1">
    <citation type="journal article" date="2018" name="Front. Plant Sci.">
        <title>In planta functional analysis and subcellular localization of the oomycete pathogen Plasmopara viticola candidate RXLR effector repertoire.</title>
        <authorList>
            <person name="Liu Y."/>
            <person name="Lan X."/>
            <person name="Song S."/>
            <person name="Yin L."/>
            <person name="Dry I.B."/>
            <person name="Qu J."/>
            <person name="Xiang J."/>
            <person name="Lu J."/>
        </authorList>
    </citation>
    <scope>NUCLEOTIDE SEQUENCE [MRNA]</scope>
    <scope>DOMAIN</scope>
    <scope>FUNCTION</scope>
    <scope>SUBCELLULAR LOCATION</scope>
</reference>
<protein>
    <recommendedName>
        <fullName evidence="5">Secreted RxLR effector protein 90</fullName>
    </recommendedName>
</protein>
<organism>
    <name type="scientific">Plasmopara viticola</name>
    <name type="common">Downy mildew of grapevine</name>
    <name type="synonym">Botrytis viticola</name>
    <dbReference type="NCBI Taxonomy" id="143451"/>
    <lineage>
        <taxon>Eukaryota</taxon>
        <taxon>Sar</taxon>
        <taxon>Stramenopiles</taxon>
        <taxon>Oomycota</taxon>
        <taxon>Peronosporales</taxon>
        <taxon>Peronosporaceae</taxon>
        <taxon>Plasmopara</taxon>
    </lineage>
</organism>
<dbReference type="SMR" id="P0CV33"/>
<dbReference type="GlyCosmos" id="P0CV33">
    <property type="glycosylation" value="2 sites, No reported glycans"/>
</dbReference>
<dbReference type="GO" id="GO:0005576">
    <property type="term" value="C:extracellular region"/>
    <property type="evidence" value="ECO:0007669"/>
    <property type="project" value="UniProtKB-SubCell"/>
</dbReference>
<dbReference type="GO" id="GO:0020002">
    <property type="term" value="C:host cell plasma membrane"/>
    <property type="evidence" value="ECO:0007669"/>
    <property type="project" value="UniProtKB-SubCell"/>
</dbReference>
<dbReference type="GO" id="GO:0016020">
    <property type="term" value="C:membrane"/>
    <property type="evidence" value="ECO:0007669"/>
    <property type="project" value="UniProtKB-KW"/>
</dbReference>
<gene>
    <name evidence="5" type="primary">RXLR90</name>
</gene>
<proteinExistence type="evidence at transcript level"/>